<dbReference type="EC" id="2.7.7.6" evidence="1"/>
<dbReference type="EMBL" id="CP000878">
    <property type="protein sequence ID" value="ABX09536.1"/>
    <property type="molecule type" value="Genomic_DNA"/>
</dbReference>
<dbReference type="RefSeq" id="WP_012196157.1">
    <property type="nucleotide sequence ID" value="NC_009976.1"/>
</dbReference>
<dbReference type="SMR" id="A9BCH4"/>
<dbReference type="STRING" id="93059.P9211_16051"/>
<dbReference type="KEGG" id="pmj:P9211_16051"/>
<dbReference type="eggNOG" id="COG0086">
    <property type="taxonomic scope" value="Bacteria"/>
</dbReference>
<dbReference type="HOGENOM" id="CLU_000524_1_0_3"/>
<dbReference type="OrthoDB" id="9815296at2"/>
<dbReference type="Proteomes" id="UP000000788">
    <property type="component" value="Chromosome"/>
</dbReference>
<dbReference type="GO" id="GO:0000428">
    <property type="term" value="C:DNA-directed RNA polymerase complex"/>
    <property type="evidence" value="ECO:0007669"/>
    <property type="project" value="UniProtKB-KW"/>
</dbReference>
<dbReference type="GO" id="GO:0003677">
    <property type="term" value="F:DNA binding"/>
    <property type="evidence" value="ECO:0007669"/>
    <property type="project" value="UniProtKB-UniRule"/>
</dbReference>
<dbReference type="GO" id="GO:0003899">
    <property type="term" value="F:DNA-directed RNA polymerase activity"/>
    <property type="evidence" value="ECO:0007669"/>
    <property type="project" value="UniProtKB-UniRule"/>
</dbReference>
<dbReference type="GO" id="GO:0008270">
    <property type="term" value="F:zinc ion binding"/>
    <property type="evidence" value="ECO:0007669"/>
    <property type="project" value="UniProtKB-UniRule"/>
</dbReference>
<dbReference type="GO" id="GO:0006351">
    <property type="term" value="P:DNA-templated transcription"/>
    <property type="evidence" value="ECO:0007669"/>
    <property type="project" value="UniProtKB-UniRule"/>
</dbReference>
<dbReference type="CDD" id="cd02655">
    <property type="entry name" value="RNAP_beta'_C"/>
    <property type="match status" value="1"/>
</dbReference>
<dbReference type="FunFam" id="1.10.150.390:FF:000002">
    <property type="entry name" value="DNA-directed RNA polymerase subunit beta"/>
    <property type="match status" value="1"/>
</dbReference>
<dbReference type="Gene3D" id="1.10.132.30">
    <property type="match status" value="1"/>
</dbReference>
<dbReference type="Gene3D" id="1.10.150.390">
    <property type="match status" value="1"/>
</dbReference>
<dbReference type="Gene3D" id="1.10.1790.20">
    <property type="match status" value="1"/>
</dbReference>
<dbReference type="Gene3D" id="2.40.50.100">
    <property type="match status" value="1"/>
</dbReference>
<dbReference type="Gene3D" id="1.10.274.100">
    <property type="entry name" value="RNA polymerase Rpb1, domain 3"/>
    <property type="match status" value="1"/>
</dbReference>
<dbReference type="HAMAP" id="MF_01324">
    <property type="entry name" value="RNApol_bact_RpoC2"/>
    <property type="match status" value="1"/>
</dbReference>
<dbReference type="InterPro" id="IPR012756">
    <property type="entry name" value="DNA-dir_RpoC2_beta_pp"/>
</dbReference>
<dbReference type="InterPro" id="IPR045867">
    <property type="entry name" value="DNA-dir_RpoC_beta_prime"/>
</dbReference>
<dbReference type="InterPro" id="IPR007066">
    <property type="entry name" value="RNA_pol_Rpb1_3"/>
</dbReference>
<dbReference type="InterPro" id="IPR042102">
    <property type="entry name" value="RNA_pol_Rpb1_3_sf"/>
</dbReference>
<dbReference type="InterPro" id="IPR007083">
    <property type="entry name" value="RNA_pol_Rpb1_4"/>
</dbReference>
<dbReference type="InterPro" id="IPR007081">
    <property type="entry name" value="RNA_pol_Rpb1_5"/>
</dbReference>
<dbReference type="InterPro" id="IPR038120">
    <property type="entry name" value="Rpb1_funnel_sf"/>
</dbReference>
<dbReference type="NCBIfam" id="NF002724">
    <property type="entry name" value="PRK02597.1"/>
    <property type="match status" value="1"/>
</dbReference>
<dbReference type="NCBIfam" id="TIGR02388">
    <property type="entry name" value="rpoC2_cyan"/>
    <property type="match status" value="1"/>
</dbReference>
<dbReference type="PANTHER" id="PTHR19376">
    <property type="entry name" value="DNA-DIRECTED RNA POLYMERASE"/>
    <property type="match status" value="1"/>
</dbReference>
<dbReference type="PANTHER" id="PTHR19376:SF54">
    <property type="entry name" value="DNA-DIRECTED RNA POLYMERASE SUBUNIT BETA"/>
    <property type="match status" value="1"/>
</dbReference>
<dbReference type="Pfam" id="PF04983">
    <property type="entry name" value="RNA_pol_Rpb1_3"/>
    <property type="match status" value="1"/>
</dbReference>
<dbReference type="Pfam" id="PF05000">
    <property type="entry name" value="RNA_pol_Rpb1_4"/>
    <property type="match status" value="1"/>
</dbReference>
<dbReference type="Pfam" id="PF04998">
    <property type="entry name" value="RNA_pol_Rpb1_5"/>
    <property type="match status" value="1"/>
</dbReference>
<dbReference type="SUPFAM" id="SSF64484">
    <property type="entry name" value="beta and beta-prime subunits of DNA dependent RNA-polymerase"/>
    <property type="match status" value="1"/>
</dbReference>
<name>RPOC2_PROM4</name>
<organism>
    <name type="scientific">Prochlorococcus marinus (strain MIT 9211)</name>
    <dbReference type="NCBI Taxonomy" id="93059"/>
    <lineage>
        <taxon>Bacteria</taxon>
        <taxon>Bacillati</taxon>
        <taxon>Cyanobacteriota</taxon>
        <taxon>Cyanophyceae</taxon>
        <taxon>Synechococcales</taxon>
        <taxon>Prochlorococcaceae</taxon>
        <taxon>Prochlorococcus</taxon>
    </lineage>
</organism>
<feature type="chain" id="PRO_0000353525" description="DNA-directed RNA polymerase subunit beta'">
    <location>
        <begin position="1"/>
        <end position="1366"/>
    </location>
</feature>
<feature type="region of interest" description="Disordered" evidence="2">
    <location>
        <begin position="1"/>
        <end position="40"/>
    </location>
</feature>
<feature type="region of interest" description="Disordered" evidence="2">
    <location>
        <begin position="1299"/>
        <end position="1366"/>
    </location>
</feature>
<feature type="compositionally biased region" description="Basic residues" evidence="2">
    <location>
        <begin position="7"/>
        <end position="24"/>
    </location>
</feature>
<feature type="compositionally biased region" description="Polar residues" evidence="2">
    <location>
        <begin position="25"/>
        <end position="38"/>
    </location>
</feature>
<feature type="compositionally biased region" description="Low complexity" evidence="2">
    <location>
        <begin position="1353"/>
        <end position="1366"/>
    </location>
</feature>
<feature type="binding site" evidence="1">
    <location>
        <position position="250"/>
    </location>
    <ligand>
        <name>Zn(2+)</name>
        <dbReference type="ChEBI" id="CHEBI:29105"/>
    </ligand>
</feature>
<feature type="binding site" evidence="1">
    <location>
        <position position="317"/>
    </location>
    <ligand>
        <name>Zn(2+)</name>
        <dbReference type="ChEBI" id="CHEBI:29105"/>
    </ligand>
</feature>
<feature type="binding site" evidence="1">
    <location>
        <position position="324"/>
    </location>
    <ligand>
        <name>Zn(2+)</name>
        <dbReference type="ChEBI" id="CHEBI:29105"/>
    </ligand>
</feature>
<feature type="binding site" evidence="1">
    <location>
        <position position="327"/>
    </location>
    <ligand>
        <name>Zn(2+)</name>
        <dbReference type="ChEBI" id="CHEBI:29105"/>
    </ligand>
</feature>
<keyword id="KW-0240">DNA-directed RNA polymerase</keyword>
<keyword id="KW-0479">Metal-binding</keyword>
<keyword id="KW-0548">Nucleotidyltransferase</keyword>
<keyword id="KW-1185">Reference proteome</keyword>
<keyword id="KW-0804">Transcription</keyword>
<keyword id="KW-0808">Transferase</keyword>
<keyword id="KW-0862">Zinc</keyword>
<sequence length="1366" mass="149406">MTSTSPKSRRSSGKGRKGSKKKGKQVSQIPPLSKTPPSFRNRIVDKKALKQLVAWAYKNHGTAVTAAMADNLKDLGFKYATQAAVSISVDDLKVPDAKQDLLGEAEQQITATEECYRLGEITEVERHTKVIDTWTETNERLVDAVKKNFNQNDPLNSVWMMANSGARGNMSQVRQLVGMRGLMANPQGEIIDLPIRTNFREGLTVTEYVISSYGARKGLVDTALRTADSGYLTRRLVDVAQDVIVREEDCGTSRAILVKAEDGRFGNRLVGRLTAEQIVGDADEIIAKKDTAIDPELSKKIEKAGLAGIMVRSPLTCEATRSVCRKCYGWALAHNNLVDLGEAVGIIAAQSIGEPGTQLTMRTFHTGGVSTAETGVVRSTIAGKVEFGPNARVRGYRTPHGVEAQQAEVDFTLKVKPTGSGKTQTIEISNGSLIFVDNAQEIAADVTVAQITAGAVKKSVEKATKDVICDLAGQVRYESVIQPREVTDRQGNITLKAQRLGRLWVLAGDVYNLPPNARPVVKANSKVSKGMVLAEASQASEFGGEVRLRDSIGDSREVQIVTTSMTLKDFKLLEESTHTGEIWNLEAKDGTRYRLNSIPGSKISSGEIVAELADDRFRTKTGGLVKYAPGLAIKKARSAKNGFEVSNGGTLIWVPQETHEINKDISLLMIKDRQWIEAGTEVVKDIFSQTAGIVTVTQKNDILREIIVRSGEFHLCNESKVLERFEDEGQMVNPGENIAKGLKADSMVLVQTVESRDGKGLLLRPVEEYTIPDQAQLPELSHVKQEKGPSLGLRATQRLAFKDGELIKSVEGVELLKTQLILDTFETTPQMTVDVEVALDKRAKTINRLRLVILESILVRRDTMSDSSHGSTHTELQIKDNQLVNADDVVATTQILCKEDGIVQLPNAVDDEPIRRLIVERAQDTTVLTAKDNPILKVGERVVDGDLLSKGEPINCCGEVEDIKGNKVTLRLGRPYMVSPDSVLHVRDGDLVQRGDGLALLVFERQKTGDIVQGLPRIEELLEARRPRESAILCKKPGIVEIKQEEDDESVVVKVIESDDSLSEYSILLGRNVMVSDGQEVHAGEFLTDGPVNPHELLECFFGDLRDRKPLLEAAQESIAKLQHRLVTEVQNVYKSQGVSIDDKHIEVIVRQMTSKVRIEDAGDTTLLPGELIEIRQVEDTNQAISVTGGAPAEFTPVLLGITKASLNTDSFISAASFQETTRVLTEAAIEGKSDWLRGLKENVIIGRLIPAGTGFSGFVEELRAEAGPHPDILAEDPAGYRRMQNLRPDYTVEMPVSTAAKSTSVLDDPSEEDLEATRSRHGIDPTTSNFAAFARPSGDDPSQEDQKPDPIALEGLQEEGLLADE</sequence>
<proteinExistence type="inferred from homology"/>
<protein>
    <recommendedName>
        <fullName evidence="1">DNA-directed RNA polymerase subunit beta'</fullName>
        <shortName evidence="1">RNAP subunit beta'</shortName>
        <ecNumber evidence="1">2.7.7.6</ecNumber>
    </recommendedName>
    <alternativeName>
        <fullName evidence="1">RNA polymerase subunit beta'</fullName>
    </alternativeName>
    <alternativeName>
        <fullName evidence="1">Transcriptase subunit beta'</fullName>
    </alternativeName>
</protein>
<evidence type="ECO:0000255" key="1">
    <source>
        <dbReference type="HAMAP-Rule" id="MF_01324"/>
    </source>
</evidence>
<evidence type="ECO:0000256" key="2">
    <source>
        <dbReference type="SAM" id="MobiDB-lite"/>
    </source>
</evidence>
<accession>A9BCH4</accession>
<comment type="function">
    <text evidence="1">DNA-dependent RNA polymerase catalyzes the transcription of DNA into RNA using the four ribonucleoside triphosphates as substrates.</text>
</comment>
<comment type="catalytic activity">
    <reaction evidence="1">
        <text>RNA(n) + a ribonucleoside 5'-triphosphate = RNA(n+1) + diphosphate</text>
        <dbReference type="Rhea" id="RHEA:21248"/>
        <dbReference type="Rhea" id="RHEA-COMP:14527"/>
        <dbReference type="Rhea" id="RHEA-COMP:17342"/>
        <dbReference type="ChEBI" id="CHEBI:33019"/>
        <dbReference type="ChEBI" id="CHEBI:61557"/>
        <dbReference type="ChEBI" id="CHEBI:140395"/>
        <dbReference type="EC" id="2.7.7.6"/>
    </reaction>
</comment>
<comment type="cofactor">
    <cofactor evidence="1">
        <name>Zn(2+)</name>
        <dbReference type="ChEBI" id="CHEBI:29105"/>
    </cofactor>
    <text evidence="1">Binds 1 Zn(2+) ion per subunit.</text>
</comment>
<comment type="subunit">
    <text evidence="1">In cyanobacteria the RNAP catalytic core is composed of 2 alpha, 1 beta, 1 beta', 1 gamma and 1 omega subunit. When a sigma factor is associated with the core the holoenzyme is formed, which can initiate transcription.</text>
</comment>
<comment type="similarity">
    <text evidence="1">Belongs to the RNA polymerase beta' chain family. RpoC2 subfamily.</text>
</comment>
<gene>
    <name evidence="1" type="primary">rpoC2</name>
    <name type="ordered locus">P9211_16051</name>
</gene>
<reference key="1">
    <citation type="journal article" date="2007" name="PLoS Genet.">
        <title>Patterns and implications of gene gain and loss in the evolution of Prochlorococcus.</title>
        <authorList>
            <person name="Kettler G.C."/>
            <person name="Martiny A.C."/>
            <person name="Huang K."/>
            <person name="Zucker J."/>
            <person name="Coleman M.L."/>
            <person name="Rodrigue S."/>
            <person name="Chen F."/>
            <person name="Lapidus A."/>
            <person name="Ferriera S."/>
            <person name="Johnson J."/>
            <person name="Steglich C."/>
            <person name="Church G.M."/>
            <person name="Richardson P."/>
            <person name="Chisholm S.W."/>
        </authorList>
    </citation>
    <scope>NUCLEOTIDE SEQUENCE [LARGE SCALE GENOMIC DNA]</scope>
    <source>
        <strain>MIT 9211</strain>
    </source>
</reference>